<comment type="subcellular location">
    <subcellularLocation>
        <location evidence="1">Mitochondrion</location>
    </subcellularLocation>
</comment>
<comment type="similarity">
    <text evidence="3">Belongs to the AIM9 family.</text>
</comment>
<feature type="transit peptide" description="Mitochondrion" evidence="2">
    <location>
        <begin position="1"/>
        <end position="43"/>
    </location>
</feature>
<feature type="chain" id="PRO_0000408733" description="Altered inheritance of mitochondria protein 9, mitochondrial">
    <location>
        <begin position="44"/>
        <end position="627"/>
    </location>
</feature>
<accession>A6ZR36</accession>
<proteinExistence type="inferred from homology"/>
<name>AIM9_YEAS7</name>
<evidence type="ECO:0000250" key="1"/>
<evidence type="ECO:0000255" key="2"/>
<evidence type="ECO:0000305" key="3"/>
<protein>
    <recommendedName>
        <fullName>Altered inheritance of mitochondria protein 9, mitochondrial</fullName>
    </recommendedName>
    <alternativeName>
        <fullName>Found in mitochondrial proteome protein 29</fullName>
    </alternativeName>
</protein>
<dbReference type="EMBL" id="AAFW02000048">
    <property type="protein sequence ID" value="EDN63056.1"/>
    <property type="molecule type" value="Genomic_DNA"/>
</dbReference>
<dbReference type="HOGENOM" id="CLU_019189_0_1_1"/>
<dbReference type="Proteomes" id="UP000007060">
    <property type="component" value="Unassembled WGS sequence"/>
</dbReference>
<dbReference type="GO" id="GO:0005739">
    <property type="term" value="C:mitochondrion"/>
    <property type="evidence" value="ECO:0007669"/>
    <property type="project" value="UniProtKB-SubCell"/>
</dbReference>
<dbReference type="InterPro" id="IPR011009">
    <property type="entry name" value="Kinase-like_dom_sf"/>
</dbReference>
<dbReference type="InterPro" id="IPR051035">
    <property type="entry name" value="Mito_inheritance_9"/>
</dbReference>
<dbReference type="PANTHER" id="PTHR36091">
    <property type="entry name" value="ALTERED INHERITANCE OF MITOCHONDRIA PROTEIN 9, MITOCHONDRIAL"/>
    <property type="match status" value="1"/>
</dbReference>
<dbReference type="PANTHER" id="PTHR36091:SF1">
    <property type="entry name" value="ALTERED INHERITANCE OF MITOCHONDRIA PROTEIN 9, MITOCHONDRIAL"/>
    <property type="match status" value="1"/>
</dbReference>
<dbReference type="SUPFAM" id="SSF56112">
    <property type="entry name" value="Protein kinase-like (PK-like)"/>
    <property type="match status" value="1"/>
</dbReference>
<keyword id="KW-0496">Mitochondrion</keyword>
<keyword id="KW-0809">Transit peptide</keyword>
<gene>
    <name type="primary">AIM9</name>
    <name type="synonym">FMP29</name>
    <name type="ORF">SCY_1583</name>
</gene>
<organism>
    <name type="scientific">Saccharomyces cerevisiae (strain YJM789)</name>
    <name type="common">Baker's yeast</name>
    <dbReference type="NCBI Taxonomy" id="307796"/>
    <lineage>
        <taxon>Eukaryota</taxon>
        <taxon>Fungi</taxon>
        <taxon>Dikarya</taxon>
        <taxon>Ascomycota</taxon>
        <taxon>Saccharomycotina</taxon>
        <taxon>Saccharomycetes</taxon>
        <taxon>Saccharomycetales</taxon>
        <taxon>Saccharomycetaceae</taxon>
        <taxon>Saccharomyces</taxon>
    </lineage>
</organism>
<reference key="1">
    <citation type="journal article" date="2007" name="Proc. Natl. Acad. Sci. U.S.A.">
        <title>Genome sequencing and comparative analysis of Saccharomyces cerevisiae strain YJM789.</title>
        <authorList>
            <person name="Wei W."/>
            <person name="McCusker J.H."/>
            <person name="Hyman R.W."/>
            <person name="Jones T."/>
            <person name="Ning Y."/>
            <person name="Cao Z."/>
            <person name="Gu Z."/>
            <person name="Bruno D."/>
            <person name="Miranda M."/>
            <person name="Nguyen M."/>
            <person name="Wilhelmy J."/>
            <person name="Komp C."/>
            <person name="Tamse R."/>
            <person name="Wang X."/>
            <person name="Jia P."/>
            <person name="Luedi P."/>
            <person name="Oefner P.J."/>
            <person name="David L."/>
            <person name="Dietrich F.S."/>
            <person name="Li Y."/>
            <person name="Davis R.W."/>
            <person name="Steinmetz L.M."/>
        </authorList>
    </citation>
    <scope>NUCLEOTIDE SEQUENCE [LARGE SCALE GENOMIC DNA]</scope>
    <source>
        <strain>YJM789</strain>
    </source>
</reference>
<sequence>MIRYTVAGHSRRCVVGASKRVGAIKCITVAATKRFISNKPNEVFTKLTNDNDPKRDAFFKYTWGSWLKNDKQEKEKRFTKFSIEGLNRILNDIYIQSNEMAKAPDGKILPPVFNKNLTVSLVNNVVPKNIGKINPNEKVQVTTLSSIHEGKHHRIYKVDTNLNKAFILRIPYPLENENTLSYRIRSEVATMDFADLKLGIKVPKIFCYGVNSLNPVRQPFVLQEFIEGELLMKDWDPLIEDGSSNQKKYDNVIKQVSDFQSKLVSLKLNAFGSIYFNNDLKDGNEKEFVKEDIYDGETNPDLQNRWKIGPSVERCLWRHKSHLDFHKQMKPFLGPWPKKSPMDIIKNTGLLEAENAKTRIAMKEAGSSAELMYPRTLKEQITTYENLAKIAPDLFNVKTKAIPNMQELLSPRLFHPDLDPMNIIVNKEAQEAYLLDFEGACTKPFILQNSPQFIAYDGPKIYDLKEDITDFDKLSEAEKAQYQFMYKRTRNQHQWEKKLNDNNPKLITAVAPPVKLLRSPYIAAVERKTEEEYLLIDESLLQLKEVWDIFAQNDLVNQKKFPLNYSKEDIERHVEDLQKLHEKLISTPFAATQGWIPQDMFDQLLNSGSIVKQENGDYTVKQPEATK</sequence>